<protein>
    <recommendedName>
        <fullName evidence="1">4-hydroxy-tetrahydrodipicolinate reductase</fullName>
        <shortName evidence="1">HTPA reductase</shortName>
        <ecNumber evidence="1">1.17.1.8</ecNumber>
    </recommendedName>
</protein>
<accession>Q0TP54</accession>
<dbReference type="EC" id="1.17.1.8" evidence="1"/>
<dbReference type="EMBL" id="CP000246">
    <property type="protein sequence ID" value="ABG83905.1"/>
    <property type="molecule type" value="Genomic_DNA"/>
</dbReference>
<dbReference type="RefSeq" id="WP_003455184.1">
    <property type="nucleotide sequence ID" value="NC_008261.1"/>
</dbReference>
<dbReference type="SMR" id="Q0TP54"/>
<dbReference type="STRING" id="195103.CPF_2162"/>
<dbReference type="PaxDb" id="195103-CPF_2162"/>
<dbReference type="GeneID" id="93001557"/>
<dbReference type="KEGG" id="cpf:CPF_2162"/>
<dbReference type="eggNOG" id="COG0289">
    <property type="taxonomic scope" value="Bacteria"/>
</dbReference>
<dbReference type="HOGENOM" id="CLU_047479_2_2_9"/>
<dbReference type="UniPathway" id="UPA00034">
    <property type="reaction ID" value="UER00018"/>
</dbReference>
<dbReference type="Proteomes" id="UP000001823">
    <property type="component" value="Chromosome"/>
</dbReference>
<dbReference type="GO" id="GO:0005829">
    <property type="term" value="C:cytosol"/>
    <property type="evidence" value="ECO:0007669"/>
    <property type="project" value="TreeGrafter"/>
</dbReference>
<dbReference type="GO" id="GO:0008839">
    <property type="term" value="F:4-hydroxy-tetrahydrodipicolinate reductase"/>
    <property type="evidence" value="ECO:0007669"/>
    <property type="project" value="UniProtKB-EC"/>
</dbReference>
<dbReference type="GO" id="GO:0051287">
    <property type="term" value="F:NAD binding"/>
    <property type="evidence" value="ECO:0007669"/>
    <property type="project" value="UniProtKB-UniRule"/>
</dbReference>
<dbReference type="GO" id="GO:0050661">
    <property type="term" value="F:NADP binding"/>
    <property type="evidence" value="ECO:0007669"/>
    <property type="project" value="UniProtKB-UniRule"/>
</dbReference>
<dbReference type="GO" id="GO:0016726">
    <property type="term" value="F:oxidoreductase activity, acting on CH or CH2 groups, NAD or NADP as acceptor"/>
    <property type="evidence" value="ECO:0007669"/>
    <property type="project" value="UniProtKB-UniRule"/>
</dbReference>
<dbReference type="GO" id="GO:0019877">
    <property type="term" value="P:diaminopimelate biosynthetic process"/>
    <property type="evidence" value="ECO:0007669"/>
    <property type="project" value="UniProtKB-UniRule"/>
</dbReference>
<dbReference type="GO" id="GO:0009089">
    <property type="term" value="P:lysine biosynthetic process via diaminopimelate"/>
    <property type="evidence" value="ECO:0007669"/>
    <property type="project" value="UniProtKB-UniRule"/>
</dbReference>
<dbReference type="CDD" id="cd02274">
    <property type="entry name" value="DHDPR_N"/>
    <property type="match status" value="1"/>
</dbReference>
<dbReference type="FunFam" id="3.30.360.10:FF:000009">
    <property type="entry name" value="4-hydroxy-tetrahydrodipicolinate reductase"/>
    <property type="match status" value="1"/>
</dbReference>
<dbReference type="Gene3D" id="3.30.360.10">
    <property type="entry name" value="Dihydrodipicolinate Reductase, domain 2"/>
    <property type="match status" value="1"/>
</dbReference>
<dbReference type="Gene3D" id="3.40.50.720">
    <property type="entry name" value="NAD(P)-binding Rossmann-like Domain"/>
    <property type="match status" value="1"/>
</dbReference>
<dbReference type="HAMAP" id="MF_00102">
    <property type="entry name" value="DapB"/>
    <property type="match status" value="1"/>
</dbReference>
<dbReference type="InterPro" id="IPR022663">
    <property type="entry name" value="DapB_C"/>
</dbReference>
<dbReference type="InterPro" id="IPR000846">
    <property type="entry name" value="DapB_N"/>
</dbReference>
<dbReference type="InterPro" id="IPR022664">
    <property type="entry name" value="DapB_N_CS"/>
</dbReference>
<dbReference type="InterPro" id="IPR023940">
    <property type="entry name" value="DHDPR_bac"/>
</dbReference>
<dbReference type="InterPro" id="IPR036291">
    <property type="entry name" value="NAD(P)-bd_dom_sf"/>
</dbReference>
<dbReference type="NCBIfam" id="TIGR00036">
    <property type="entry name" value="dapB"/>
    <property type="match status" value="1"/>
</dbReference>
<dbReference type="PANTHER" id="PTHR20836:SF7">
    <property type="entry name" value="4-HYDROXY-TETRAHYDRODIPICOLINATE REDUCTASE"/>
    <property type="match status" value="1"/>
</dbReference>
<dbReference type="PANTHER" id="PTHR20836">
    <property type="entry name" value="DIHYDRODIPICOLINATE REDUCTASE"/>
    <property type="match status" value="1"/>
</dbReference>
<dbReference type="Pfam" id="PF05173">
    <property type="entry name" value="DapB_C"/>
    <property type="match status" value="1"/>
</dbReference>
<dbReference type="Pfam" id="PF01113">
    <property type="entry name" value="DapB_N"/>
    <property type="match status" value="1"/>
</dbReference>
<dbReference type="PIRSF" id="PIRSF000161">
    <property type="entry name" value="DHPR"/>
    <property type="match status" value="1"/>
</dbReference>
<dbReference type="SUPFAM" id="SSF55347">
    <property type="entry name" value="Glyceraldehyde-3-phosphate dehydrogenase-like, C-terminal domain"/>
    <property type="match status" value="1"/>
</dbReference>
<dbReference type="SUPFAM" id="SSF51735">
    <property type="entry name" value="NAD(P)-binding Rossmann-fold domains"/>
    <property type="match status" value="1"/>
</dbReference>
<dbReference type="PROSITE" id="PS01298">
    <property type="entry name" value="DAPB"/>
    <property type="match status" value="1"/>
</dbReference>
<feature type="chain" id="PRO_1000008557" description="4-hydroxy-tetrahydrodipicolinate reductase">
    <location>
        <begin position="1"/>
        <end position="254"/>
    </location>
</feature>
<feature type="active site" description="Proton donor/acceptor" evidence="1">
    <location>
        <position position="143"/>
    </location>
</feature>
<feature type="active site" description="Proton donor" evidence="1">
    <location>
        <position position="147"/>
    </location>
</feature>
<feature type="binding site" evidence="1">
    <location>
        <begin position="8"/>
        <end position="13"/>
    </location>
    <ligand>
        <name>NAD(+)</name>
        <dbReference type="ChEBI" id="CHEBI:57540"/>
    </ligand>
</feature>
<feature type="binding site" evidence="1">
    <location>
        <position position="35"/>
    </location>
    <ligand>
        <name>NAD(+)</name>
        <dbReference type="ChEBI" id="CHEBI:57540"/>
    </ligand>
</feature>
<feature type="binding site" evidence="1">
    <location>
        <begin position="86"/>
        <end position="88"/>
    </location>
    <ligand>
        <name>NAD(+)</name>
        <dbReference type="ChEBI" id="CHEBI:57540"/>
    </ligand>
</feature>
<feature type="binding site" evidence="1">
    <location>
        <begin position="110"/>
        <end position="113"/>
    </location>
    <ligand>
        <name>NAD(+)</name>
        <dbReference type="ChEBI" id="CHEBI:57540"/>
    </ligand>
</feature>
<feature type="binding site" evidence="1">
    <location>
        <position position="144"/>
    </location>
    <ligand>
        <name>(S)-2,3,4,5-tetrahydrodipicolinate</name>
        <dbReference type="ChEBI" id="CHEBI:16845"/>
    </ligand>
</feature>
<feature type="binding site" evidence="1">
    <location>
        <begin position="153"/>
        <end position="154"/>
    </location>
    <ligand>
        <name>(S)-2,3,4,5-tetrahydrodipicolinate</name>
        <dbReference type="ChEBI" id="CHEBI:16845"/>
    </ligand>
</feature>
<sequence length="254" mass="28010">MVKVILNGCSGKMGSVISNLAETKFPNVEIVAGIDNNTKAQRPYPIFAKPEDCNVSYDVLLDFSRADALKSLVEFSKKTKKPLILCSTGYTAEDLKFIEESSKEIPLFRSANMSIGINLVNNLLKKVAPVLYENFDIELVERHHNQKVDAPSGTALLLAHTIQDSLKEETKLLYGREGIAKREKNEICVNTVRGGGIIGDHEVIFAGDGEVIEINHKAISRDVFAIGALKACEYMADKTKAGKYSMDDVLQLNF</sequence>
<gene>
    <name evidence="1" type="primary">dapB</name>
    <name type="ordered locus">CPF_2162</name>
</gene>
<organism>
    <name type="scientific">Clostridium perfringens (strain ATCC 13124 / DSM 756 / JCM 1290 / NCIMB 6125 / NCTC 8237 / Type A)</name>
    <dbReference type="NCBI Taxonomy" id="195103"/>
    <lineage>
        <taxon>Bacteria</taxon>
        <taxon>Bacillati</taxon>
        <taxon>Bacillota</taxon>
        <taxon>Clostridia</taxon>
        <taxon>Eubacteriales</taxon>
        <taxon>Clostridiaceae</taxon>
        <taxon>Clostridium</taxon>
    </lineage>
</organism>
<reference key="1">
    <citation type="journal article" date="2006" name="Genome Res.">
        <title>Skewed genomic variability in strains of the toxigenic bacterial pathogen, Clostridium perfringens.</title>
        <authorList>
            <person name="Myers G.S.A."/>
            <person name="Rasko D.A."/>
            <person name="Cheung J.K."/>
            <person name="Ravel J."/>
            <person name="Seshadri R."/>
            <person name="DeBoy R.T."/>
            <person name="Ren Q."/>
            <person name="Varga J."/>
            <person name="Awad M.M."/>
            <person name="Brinkac L.M."/>
            <person name="Daugherty S.C."/>
            <person name="Haft D.H."/>
            <person name="Dodson R.J."/>
            <person name="Madupu R."/>
            <person name="Nelson W.C."/>
            <person name="Rosovitz M.J."/>
            <person name="Sullivan S.A."/>
            <person name="Khouri H."/>
            <person name="Dimitrov G.I."/>
            <person name="Watkins K.L."/>
            <person name="Mulligan S."/>
            <person name="Benton J."/>
            <person name="Radune D."/>
            <person name="Fisher D.J."/>
            <person name="Atkins H.S."/>
            <person name="Hiscox T."/>
            <person name="Jost B.H."/>
            <person name="Billington S.J."/>
            <person name="Songer J.G."/>
            <person name="McClane B.A."/>
            <person name="Titball R.W."/>
            <person name="Rood J.I."/>
            <person name="Melville S.B."/>
            <person name="Paulsen I.T."/>
        </authorList>
    </citation>
    <scope>NUCLEOTIDE SEQUENCE [LARGE SCALE GENOMIC DNA]</scope>
    <source>
        <strain>ATCC 13124 / DSM 756 / JCM 1290 / NCIMB 6125 / NCTC 8237 / S 107 / Type A</strain>
    </source>
</reference>
<keyword id="KW-0028">Amino-acid biosynthesis</keyword>
<keyword id="KW-0963">Cytoplasm</keyword>
<keyword id="KW-0220">Diaminopimelate biosynthesis</keyword>
<keyword id="KW-0457">Lysine biosynthesis</keyword>
<keyword id="KW-0520">NAD</keyword>
<keyword id="KW-0521">NADP</keyword>
<keyword id="KW-0560">Oxidoreductase</keyword>
<name>DAPB_CLOP1</name>
<proteinExistence type="inferred from homology"/>
<evidence type="ECO:0000255" key="1">
    <source>
        <dbReference type="HAMAP-Rule" id="MF_00102"/>
    </source>
</evidence>
<evidence type="ECO:0000305" key="2"/>
<comment type="function">
    <text evidence="1">Catalyzes the conversion of 4-hydroxy-tetrahydrodipicolinate (HTPA) to tetrahydrodipicolinate.</text>
</comment>
<comment type="catalytic activity">
    <reaction evidence="1">
        <text>(S)-2,3,4,5-tetrahydrodipicolinate + NAD(+) + H2O = (2S,4S)-4-hydroxy-2,3,4,5-tetrahydrodipicolinate + NADH + H(+)</text>
        <dbReference type="Rhea" id="RHEA:35323"/>
        <dbReference type="ChEBI" id="CHEBI:15377"/>
        <dbReference type="ChEBI" id="CHEBI:15378"/>
        <dbReference type="ChEBI" id="CHEBI:16845"/>
        <dbReference type="ChEBI" id="CHEBI:57540"/>
        <dbReference type="ChEBI" id="CHEBI:57945"/>
        <dbReference type="ChEBI" id="CHEBI:67139"/>
        <dbReference type="EC" id="1.17.1.8"/>
    </reaction>
</comment>
<comment type="catalytic activity">
    <reaction evidence="1">
        <text>(S)-2,3,4,5-tetrahydrodipicolinate + NADP(+) + H2O = (2S,4S)-4-hydroxy-2,3,4,5-tetrahydrodipicolinate + NADPH + H(+)</text>
        <dbReference type="Rhea" id="RHEA:35331"/>
        <dbReference type="ChEBI" id="CHEBI:15377"/>
        <dbReference type="ChEBI" id="CHEBI:15378"/>
        <dbReference type="ChEBI" id="CHEBI:16845"/>
        <dbReference type="ChEBI" id="CHEBI:57783"/>
        <dbReference type="ChEBI" id="CHEBI:58349"/>
        <dbReference type="ChEBI" id="CHEBI:67139"/>
        <dbReference type="EC" id="1.17.1.8"/>
    </reaction>
</comment>
<comment type="pathway">
    <text evidence="1">Amino-acid biosynthesis; L-lysine biosynthesis via DAP pathway; (S)-tetrahydrodipicolinate from L-aspartate: step 4/4.</text>
</comment>
<comment type="subcellular location">
    <subcellularLocation>
        <location evidence="1">Cytoplasm</location>
    </subcellularLocation>
</comment>
<comment type="similarity">
    <text evidence="1">Belongs to the DapB family.</text>
</comment>
<comment type="caution">
    <text evidence="2">Was originally thought to be a dihydrodipicolinate reductase (DHDPR), catalyzing the conversion of dihydrodipicolinate to tetrahydrodipicolinate. However, it was shown in E.coli that the substrate of the enzymatic reaction is not dihydrodipicolinate (DHDP) but in fact (2S,4S)-4-hydroxy-2,3,4,5-tetrahydrodipicolinic acid (HTPA), the product released by the DapA-catalyzed reaction.</text>
</comment>